<protein>
    <recommendedName>
        <fullName evidence="1">2,3,4,5-tetrahydropyridine-2,6-dicarboxylate N-succinyltransferase</fullName>
        <ecNumber evidence="1">2.3.1.117</ecNumber>
    </recommendedName>
    <alternativeName>
        <fullName evidence="1">Tetrahydrodipicolinate N-succinyltransferase</fullName>
        <shortName evidence="1">THDP succinyltransferase</shortName>
        <shortName evidence="1">THP succinyltransferase</shortName>
        <shortName evidence="1">Tetrahydropicolinate succinylase</shortName>
    </alternativeName>
</protein>
<proteinExistence type="inferred from homology"/>
<accession>A6VP50</accession>
<comment type="catalytic activity">
    <reaction evidence="1">
        <text>(S)-2,3,4,5-tetrahydrodipicolinate + succinyl-CoA + H2O = (S)-2-succinylamino-6-oxoheptanedioate + CoA</text>
        <dbReference type="Rhea" id="RHEA:17325"/>
        <dbReference type="ChEBI" id="CHEBI:15377"/>
        <dbReference type="ChEBI" id="CHEBI:15685"/>
        <dbReference type="ChEBI" id="CHEBI:16845"/>
        <dbReference type="ChEBI" id="CHEBI:57287"/>
        <dbReference type="ChEBI" id="CHEBI:57292"/>
        <dbReference type="EC" id="2.3.1.117"/>
    </reaction>
</comment>
<comment type="pathway">
    <text evidence="1">Amino-acid biosynthesis; L-lysine biosynthesis via DAP pathway; LL-2,6-diaminopimelate from (S)-tetrahydrodipicolinate (succinylase route): step 1/3.</text>
</comment>
<comment type="subunit">
    <text evidence="1">Homotrimer.</text>
</comment>
<comment type="subcellular location">
    <subcellularLocation>
        <location evidence="1">Cytoplasm</location>
    </subcellularLocation>
</comment>
<comment type="similarity">
    <text evidence="1">Belongs to the transferase hexapeptide repeat family.</text>
</comment>
<dbReference type="EC" id="2.3.1.117" evidence="1"/>
<dbReference type="EMBL" id="CP000746">
    <property type="protein sequence ID" value="ABR74747.1"/>
    <property type="molecule type" value="Genomic_DNA"/>
</dbReference>
<dbReference type="RefSeq" id="WP_012073124.1">
    <property type="nucleotide sequence ID" value="NC_009655.1"/>
</dbReference>
<dbReference type="SMR" id="A6VP50"/>
<dbReference type="STRING" id="339671.Asuc_1388"/>
<dbReference type="KEGG" id="asu:Asuc_1388"/>
<dbReference type="eggNOG" id="COG2171">
    <property type="taxonomic scope" value="Bacteria"/>
</dbReference>
<dbReference type="HOGENOM" id="CLU_050859_0_1_6"/>
<dbReference type="OrthoDB" id="9775362at2"/>
<dbReference type="UniPathway" id="UPA00034">
    <property type="reaction ID" value="UER00019"/>
</dbReference>
<dbReference type="Proteomes" id="UP000001114">
    <property type="component" value="Chromosome"/>
</dbReference>
<dbReference type="GO" id="GO:0005737">
    <property type="term" value="C:cytoplasm"/>
    <property type="evidence" value="ECO:0007669"/>
    <property type="project" value="UniProtKB-SubCell"/>
</dbReference>
<dbReference type="GO" id="GO:0008666">
    <property type="term" value="F:2,3,4,5-tetrahydropyridine-2,6-dicarboxylate N-succinyltransferase activity"/>
    <property type="evidence" value="ECO:0007669"/>
    <property type="project" value="UniProtKB-UniRule"/>
</dbReference>
<dbReference type="GO" id="GO:0016779">
    <property type="term" value="F:nucleotidyltransferase activity"/>
    <property type="evidence" value="ECO:0007669"/>
    <property type="project" value="TreeGrafter"/>
</dbReference>
<dbReference type="GO" id="GO:0019877">
    <property type="term" value="P:diaminopimelate biosynthetic process"/>
    <property type="evidence" value="ECO:0007669"/>
    <property type="project" value="UniProtKB-UniRule"/>
</dbReference>
<dbReference type="GO" id="GO:0009089">
    <property type="term" value="P:lysine biosynthetic process via diaminopimelate"/>
    <property type="evidence" value="ECO:0007669"/>
    <property type="project" value="UniProtKB-UniRule"/>
</dbReference>
<dbReference type="CDD" id="cd03350">
    <property type="entry name" value="LbH_THP_succinylT"/>
    <property type="match status" value="1"/>
</dbReference>
<dbReference type="Gene3D" id="2.160.10.10">
    <property type="entry name" value="Hexapeptide repeat proteins"/>
    <property type="match status" value="1"/>
</dbReference>
<dbReference type="Gene3D" id="1.10.166.10">
    <property type="entry name" value="Tetrahydrodipicolinate-N-succinyltransferase, N-terminal domain"/>
    <property type="match status" value="1"/>
</dbReference>
<dbReference type="HAMAP" id="MF_00811">
    <property type="entry name" value="DapD"/>
    <property type="match status" value="1"/>
</dbReference>
<dbReference type="InterPro" id="IPR005664">
    <property type="entry name" value="DapD_Trfase_Hexpep_rpt_fam"/>
</dbReference>
<dbReference type="InterPro" id="IPR001451">
    <property type="entry name" value="Hexapep"/>
</dbReference>
<dbReference type="InterPro" id="IPR018357">
    <property type="entry name" value="Hexapep_transf_CS"/>
</dbReference>
<dbReference type="InterPro" id="IPR023180">
    <property type="entry name" value="THP_succinylTrfase_dom1"/>
</dbReference>
<dbReference type="InterPro" id="IPR037133">
    <property type="entry name" value="THP_succinylTrfase_N_sf"/>
</dbReference>
<dbReference type="InterPro" id="IPR011004">
    <property type="entry name" value="Trimer_LpxA-like_sf"/>
</dbReference>
<dbReference type="NCBIfam" id="TIGR00965">
    <property type="entry name" value="dapD"/>
    <property type="match status" value="1"/>
</dbReference>
<dbReference type="NCBIfam" id="NF008808">
    <property type="entry name" value="PRK11830.1"/>
    <property type="match status" value="1"/>
</dbReference>
<dbReference type="PANTHER" id="PTHR19136:SF52">
    <property type="entry name" value="2,3,4,5-TETRAHYDROPYRIDINE-2,6-DICARBOXYLATE N-SUCCINYLTRANSFERASE"/>
    <property type="match status" value="1"/>
</dbReference>
<dbReference type="PANTHER" id="PTHR19136">
    <property type="entry name" value="MOLYBDENUM COFACTOR GUANYLYLTRANSFERASE"/>
    <property type="match status" value="1"/>
</dbReference>
<dbReference type="Pfam" id="PF14602">
    <property type="entry name" value="Hexapep_2"/>
    <property type="match status" value="1"/>
</dbReference>
<dbReference type="Pfam" id="PF14805">
    <property type="entry name" value="THDPS_N_2"/>
    <property type="match status" value="1"/>
</dbReference>
<dbReference type="SUPFAM" id="SSF51161">
    <property type="entry name" value="Trimeric LpxA-like enzymes"/>
    <property type="match status" value="1"/>
</dbReference>
<dbReference type="PROSITE" id="PS00101">
    <property type="entry name" value="HEXAPEP_TRANSFERASES"/>
    <property type="match status" value="1"/>
</dbReference>
<keyword id="KW-0012">Acyltransferase</keyword>
<keyword id="KW-0028">Amino-acid biosynthesis</keyword>
<keyword id="KW-0963">Cytoplasm</keyword>
<keyword id="KW-0220">Diaminopimelate biosynthesis</keyword>
<keyword id="KW-0457">Lysine biosynthesis</keyword>
<keyword id="KW-1185">Reference proteome</keyword>
<keyword id="KW-0677">Repeat</keyword>
<keyword id="KW-0808">Transferase</keyword>
<evidence type="ECO:0000255" key="1">
    <source>
        <dbReference type="HAMAP-Rule" id="MF_00811"/>
    </source>
</evidence>
<sequence length="275" mass="29731">MSNLQAVIEEAFERRADITPKTVDAATRAAIEEVIEGLDSGKFRVAEKIDGEWVTHQWLKKAVLLSFRINENEIIDGAETKYYDKVALKFADYSEERFAQEGFRVVPSATVRKGAYISKNTVLMPSYVNIGAYVGEGTMVDTWATVGSCAQIGKNVHLSGGVGIGGVLEPLQANPTIIGDNCFIGARSEVVEGVIVEDGCVISMGVFIGQSTKIYDRETGEIHYGRVPAGSVVVSGSLPSKDGKYSLYCAVIVKKVDAKTLGKVGINELLRSIEE</sequence>
<gene>
    <name evidence="1" type="primary">dapD</name>
    <name type="ordered locus">Asuc_1388</name>
</gene>
<reference key="1">
    <citation type="journal article" date="2010" name="BMC Genomics">
        <title>A genomic perspective on the potential of Actinobacillus succinogenes for industrial succinate production.</title>
        <authorList>
            <person name="McKinlay J.B."/>
            <person name="Laivenieks M."/>
            <person name="Schindler B.D."/>
            <person name="McKinlay A.A."/>
            <person name="Siddaramappa S."/>
            <person name="Challacombe J.F."/>
            <person name="Lowry S.R."/>
            <person name="Clum A."/>
            <person name="Lapidus A.L."/>
            <person name="Burkhart K.B."/>
            <person name="Harkins V."/>
            <person name="Vieille C."/>
        </authorList>
    </citation>
    <scope>NUCLEOTIDE SEQUENCE [LARGE SCALE GENOMIC DNA]</scope>
    <source>
        <strain>ATCC 55618 / DSM 22257 / CCUG 43843 / 130Z</strain>
    </source>
</reference>
<name>DAPD_ACTSZ</name>
<feature type="chain" id="PRO_1000072852" description="2,3,4,5-tetrahydropyridine-2,6-dicarboxylate N-succinyltransferase">
    <location>
        <begin position="1"/>
        <end position="275"/>
    </location>
</feature>
<feature type="binding site" evidence="1">
    <location>
        <position position="104"/>
    </location>
    <ligand>
        <name>substrate</name>
    </ligand>
</feature>
<feature type="binding site" evidence="1">
    <location>
        <position position="141"/>
    </location>
    <ligand>
        <name>substrate</name>
    </ligand>
</feature>
<organism>
    <name type="scientific">Actinobacillus succinogenes (strain ATCC 55618 / DSM 22257 / CCUG 43843 / 130Z)</name>
    <dbReference type="NCBI Taxonomy" id="339671"/>
    <lineage>
        <taxon>Bacteria</taxon>
        <taxon>Pseudomonadati</taxon>
        <taxon>Pseudomonadota</taxon>
        <taxon>Gammaproteobacteria</taxon>
        <taxon>Pasteurellales</taxon>
        <taxon>Pasteurellaceae</taxon>
        <taxon>Actinobacillus</taxon>
    </lineage>
</organism>